<gene>
    <name type="primary">yggF</name>
    <name type="synonym">yggK</name>
    <name type="ordered locus">b2930</name>
    <name type="ordered locus">JW2897</name>
</gene>
<sequence length="321" mass="34323">MMSLAWPLFRVTEQAALAAWPQTGCGDKNKIDGLAVTAMRQALNDVAFRGRVVIGEGEIDHAPMLWIGEEVGKGDGPEVDIAVDPIEGTRMVAMGQSNALAVMAFAPRDSLLHAPDMYMKKLVVNRLAAGAIDLSLPLTDNLRNVAKALGKPLDKLRMVTLDKPRLSAAIEEATQLGVKVFALPDGDVAASVLTCWQDNPYDVMYTIGGAPEGVISACAVKALGGDMQAELIDFCQAKGDYTENRQIAEQERKRCKAMGVDVNRVYSLDELVRGNDILFSATGVTGGELVNGIQQTANGVRTQTLLIGGADQTCNIIDSLH</sequence>
<organism>
    <name type="scientific">Escherichia coli (strain K12)</name>
    <dbReference type="NCBI Taxonomy" id="83333"/>
    <lineage>
        <taxon>Bacteria</taxon>
        <taxon>Pseudomonadati</taxon>
        <taxon>Pseudomonadota</taxon>
        <taxon>Gammaproteobacteria</taxon>
        <taxon>Enterobacterales</taxon>
        <taxon>Enterobacteriaceae</taxon>
        <taxon>Escherichia</taxon>
    </lineage>
</organism>
<keyword id="KW-0119">Carbohydrate metabolism</keyword>
<keyword id="KW-0378">Hydrolase</keyword>
<keyword id="KW-0464">Manganese</keyword>
<keyword id="KW-0479">Metal-binding</keyword>
<keyword id="KW-1185">Reference proteome</keyword>
<accession>P21437</accession>
<accession>P39837</accession>
<accession>Q2M9R2</accession>
<comment type="function">
    <text evidence="2">Catalyzes the hydrolysis of fructose 1,6-bisphosphate to fructose 6-phosphate. Also displays a low activity toward glucose 1,6-bisphosphate, and no activity against ribulose 1,5-bisphosphate, fructose 2,6-bisphosphate, or fructose 1-phosphate.</text>
</comment>
<comment type="catalytic activity">
    <reaction evidence="2">
        <text>beta-D-fructose 1,6-bisphosphate + H2O = beta-D-fructose 6-phosphate + phosphate</text>
        <dbReference type="Rhea" id="RHEA:11064"/>
        <dbReference type="ChEBI" id="CHEBI:15377"/>
        <dbReference type="ChEBI" id="CHEBI:32966"/>
        <dbReference type="ChEBI" id="CHEBI:43474"/>
        <dbReference type="ChEBI" id="CHEBI:57634"/>
        <dbReference type="EC" id="3.1.3.11"/>
    </reaction>
</comment>
<comment type="cofactor">
    <cofactor evidence="2">
        <name>Mn(2+)</name>
        <dbReference type="ChEBI" id="CHEBI:29035"/>
    </cofactor>
    <text evidence="2">Manganese. Mg(2+), Co(2+), Ni(2+), Ca(2+), Cu(2+) and Zn(2+) cannot support activity.</text>
</comment>
<comment type="activity regulation">
    <text evidence="2">Competitively inhibited by low concentrations of phosphate (IC50 of 1.2 mM) and is also sensitive to Li(+) (IC50 of 15.8 mM). Also inhibited by 1 mM ATP or 50 mM KCl (60% and 20% residual activity, respectively). Slightly activated (40-50%) by the addition of 1 mM dithiothreitol in vitro.</text>
</comment>
<comment type="biophysicochemical properties">
    <kinetics>
        <KM evidence="2">100 uM for fructose 1,6-bisphosphate</KM>
        <KM evidence="2">1 mM for Mn(2+)</KM>
        <Vmax evidence="2">4.0 umol/min/mg enzyme</Vmax>
        <text>The catalytic efficiency of YggF is 3-fold lower than that of GlpX, the other FBPase class 2 in E.coli.</text>
    </kinetics>
    <phDependence>
        <text evidence="2">Optimum pH is 7.5-8.</text>
    </phDependence>
</comment>
<comment type="subunit">
    <text evidence="2">Homodimer.</text>
</comment>
<comment type="miscellaneous">
    <text>E.coli K12 also possesses a FBPase class 1 (Fbp), which is the primary FBPase in E.coli and probably represents the main gluconeogenic FBPase.</text>
</comment>
<comment type="similarity">
    <text evidence="3">Belongs to the FBPase class 2 family.</text>
</comment>
<comment type="sequence caution" evidence="3">
    <conflict type="frameshift">
        <sequence resource="EMBL-CDS" id="CAA32600"/>
    </conflict>
</comment>
<proteinExistence type="evidence at protein level"/>
<feature type="chain" id="PRO_0000201104" description="Fructose-1,6-bisphosphatase 2 class 2">
    <location>
        <begin position="1"/>
        <end position="321"/>
    </location>
</feature>
<feature type="binding site" evidence="1">
    <location>
        <position position="32"/>
    </location>
    <ligand>
        <name>Mn(2+)</name>
        <dbReference type="ChEBI" id="CHEBI:29035"/>
        <label>1</label>
    </ligand>
</feature>
<feature type="binding site" evidence="1">
    <location>
        <position position="56"/>
    </location>
    <ligand>
        <name>Mn(2+)</name>
        <dbReference type="ChEBI" id="CHEBI:29035"/>
        <label>1</label>
    </ligand>
</feature>
<feature type="binding site" evidence="1">
    <location>
        <position position="84"/>
    </location>
    <ligand>
        <name>Mn(2+)</name>
        <dbReference type="ChEBI" id="CHEBI:29035"/>
        <label>2</label>
    </ligand>
</feature>
<feature type="binding site" evidence="1">
    <location>
        <begin position="87"/>
        <end position="89"/>
    </location>
    <ligand>
        <name>substrate</name>
    </ligand>
</feature>
<feature type="binding site" evidence="1">
    <location>
        <position position="87"/>
    </location>
    <ligand>
        <name>Mn(2+)</name>
        <dbReference type="ChEBI" id="CHEBI:29035"/>
        <label>2</label>
    </ligand>
</feature>
<feature type="binding site" evidence="1">
    <location>
        <position position="118"/>
    </location>
    <ligand>
        <name>substrate</name>
    </ligand>
</feature>
<feature type="binding site" evidence="1">
    <location>
        <begin position="163"/>
        <end position="165"/>
    </location>
    <ligand>
        <name>substrate</name>
    </ligand>
</feature>
<feature type="binding site" evidence="1">
    <location>
        <begin position="185"/>
        <end position="187"/>
    </location>
    <ligand>
        <name>substrate</name>
    </ligand>
</feature>
<feature type="binding site" evidence="1">
    <location>
        <position position="209"/>
    </location>
    <ligand>
        <name>substrate</name>
    </ligand>
</feature>
<feature type="binding site" evidence="1">
    <location>
        <position position="212"/>
    </location>
    <ligand>
        <name>Mn(2+)</name>
        <dbReference type="ChEBI" id="CHEBI:29035"/>
        <label>2</label>
    </ligand>
</feature>
<feature type="sequence conflict" description="In Ref. 3; CAA32600." evidence="3" ref="3">
    <original>ALPDG</original>
    <variation>CPAGC</variation>
    <location>
        <begin position="182"/>
        <end position="186"/>
    </location>
</feature>
<dbReference type="EC" id="3.1.3.11"/>
<dbReference type="EMBL" id="U28377">
    <property type="protein sequence ID" value="AAA69097.1"/>
    <property type="molecule type" value="Genomic_DNA"/>
</dbReference>
<dbReference type="EMBL" id="U00096">
    <property type="protein sequence ID" value="AAC75967.1"/>
    <property type="molecule type" value="Genomic_DNA"/>
</dbReference>
<dbReference type="EMBL" id="AP009048">
    <property type="protein sequence ID" value="BAE76994.1"/>
    <property type="molecule type" value="Genomic_DNA"/>
</dbReference>
<dbReference type="EMBL" id="X14436">
    <property type="protein sequence ID" value="CAA32600.1"/>
    <property type="status" value="ALT_FRAME"/>
    <property type="molecule type" value="Genomic_DNA"/>
</dbReference>
<dbReference type="PIR" id="A65078">
    <property type="entry name" value="QQEC15"/>
</dbReference>
<dbReference type="RefSeq" id="NP_417405.1">
    <property type="nucleotide sequence ID" value="NC_000913.3"/>
</dbReference>
<dbReference type="SMR" id="P21437"/>
<dbReference type="BioGRID" id="4262334">
    <property type="interactions" value="134"/>
</dbReference>
<dbReference type="FunCoup" id="P21437">
    <property type="interactions" value="239"/>
</dbReference>
<dbReference type="IntAct" id="P21437">
    <property type="interactions" value="6"/>
</dbReference>
<dbReference type="STRING" id="511145.b2930"/>
<dbReference type="PaxDb" id="511145-b2930"/>
<dbReference type="EnsemblBacteria" id="AAC75967">
    <property type="protein sequence ID" value="AAC75967"/>
    <property type="gene ID" value="b2930"/>
</dbReference>
<dbReference type="GeneID" id="947410"/>
<dbReference type="KEGG" id="ecj:JW2897"/>
<dbReference type="KEGG" id="eco:b2930"/>
<dbReference type="KEGG" id="ecoc:C3026_16050"/>
<dbReference type="PATRIC" id="fig|1411691.4.peg.3802"/>
<dbReference type="EchoBASE" id="EB1226"/>
<dbReference type="eggNOG" id="COG1494">
    <property type="taxonomic scope" value="Bacteria"/>
</dbReference>
<dbReference type="HOGENOM" id="CLU_054938_0_0_6"/>
<dbReference type="InParanoid" id="P21437"/>
<dbReference type="OMA" id="DRTCNII"/>
<dbReference type="OrthoDB" id="9779353at2"/>
<dbReference type="PhylomeDB" id="P21437"/>
<dbReference type="BioCyc" id="EcoCyc:EG11245-MONOMER"/>
<dbReference type="BioCyc" id="MetaCyc:EG11245-MONOMER"/>
<dbReference type="BRENDA" id="3.1.3.11">
    <property type="organism ID" value="2026"/>
</dbReference>
<dbReference type="PRO" id="PR:P21437"/>
<dbReference type="Proteomes" id="UP000000625">
    <property type="component" value="Chromosome"/>
</dbReference>
<dbReference type="GO" id="GO:0042132">
    <property type="term" value="F:fructose 1,6-bisphosphate 1-phosphatase activity"/>
    <property type="evidence" value="ECO:0000314"/>
    <property type="project" value="EcoCyc"/>
</dbReference>
<dbReference type="GO" id="GO:0030145">
    <property type="term" value="F:manganese ion binding"/>
    <property type="evidence" value="ECO:0000314"/>
    <property type="project" value="EcoCyc"/>
</dbReference>
<dbReference type="GO" id="GO:0030388">
    <property type="term" value="P:fructose 1,6-bisphosphate metabolic process"/>
    <property type="evidence" value="ECO:0000318"/>
    <property type="project" value="GO_Central"/>
</dbReference>
<dbReference type="GO" id="GO:0006094">
    <property type="term" value="P:gluconeogenesis"/>
    <property type="evidence" value="ECO:0000318"/>
    <property type="project" value="GO_Central"/>
</dbReference>
<dbReference type="GO" id="GO:0006071">
    <property type="term" value="P:glycerol metabolic process"/>
    <property type="evidence" value="ECO:0007669"/>
    <property type="project" value="InterPro"/>
</dbReference>
<dbReference type="CDD" id="cd01516">
    <property type="entry name" value="FBPase_glpX"/>
    <property type="match status" value="1"/>
</dbReference>
<dbReference type="FunFam" id="3.40.190.90:FF:000001">
    <property type="entry name" value="Fructose-1,6-bisphosphatase"/>
    <property type="match status" value="1"/>
</dbReference>
<dbReference type="Gene3D" id="3.40.190.90">
    <property type="match status" value="1"/>
</dbReference>
<dbReference type="Gene3D" id="3.30.540.10">
    <property type="entry name" value="Fructose-1,6-Bisphosphatase, subunit A, domain 1"/>
    <property type="match status" value="1"/>
</dbReference>
<dbReference type="InterPro" id="IPR004464">
    <property type="entry name" value="FBPase_class-2/SBPase"/>
</dbReference>
<dbReference type="NCBIfam" id="TIGR00330">
    <property type="entry name" value="glpX"/>
    <property type="match status" value="1"/>
</dbReference>
<dbReference type="PANTHER" id="PTHR30447:SF0">
    <property type="entry name" value="FRUCTOSE-1,6-BISPHOSPHATASE 1 CLASS 2-RELATED"/>
    <property type="match status" value="1"/>
</dbReference>
<dbReference type="PANTHER" id="PTHR30447">
    <property type="entry name" value="FRUCTOSE-1,6-BISPHOSPHATASE CLASS 2"/>
    <property type="match status" value="1"/>
</dbReference>
<dbReference type="Pfam" id="PF03320">
    <property type="entry name" value="FBPase_glpX"/>
    <property type="match status" value="1"/>
</dbReference>
<dbReference type="PIRSF" id="PIRSF004532">
    <property type="entry name" value="GlpX"/>
    <property type="match status" value="1"/>
</dbReference>
<dbReference type="SUPFAM" id="SSF56655">
    <property type="entry name" value="Carbohydrate phosphatase"/>
    <property type="match status" value="1"/>
</dbReference>
<name>GLPX2_ECOLI</name>
<protein>
    <recommendedName>
        <fullName>Fructose-1,6-bisphosphatase 2 class 2</fullName>
        <shortName>FBPase 2 class 2</shortName>
        <ecNumber>3.1.3.11</ecNumber>
    </recommendedName>
    <alternativeName>
        <fullName>D-fructose-1,6-bisphosphate 1-phosphohydrolase 2 class 2</fullName>
    </alternativeName>
</protein>
<reference key="1">
    <citation type="journal article" date="1997" name="Science">
        <title>The complete genome sequence of Escherichia coli K-12.</title>
        <authorList>
            <person name="Blattner F.R."/>
            <person name="Plunkett G. III"/>
            <person name="Bloch C.A."/>
            <person name="Perna N.T."/>
            <person name="Burland V."/>
            <person name="Riley M."/>
            <person name="Collado-Vides J."/>
            <person name="Glasner J.D."/>
            <person name="Rode C.K."/>
            <person name="Mayhew G.F."/>
            <person name="Gregor J."/>
            <person name="Davis N.W."/>
            <person name="Kirkpatrick H.A."/>
            <person name="Goeden M.A."/>
            <person name="Rose D.J."/>
            <person name="Mau B."/>
            <person name="Shao Y."/>
        </authorList>
    </citation>
    <scope>NUCLEOTIDE SEQUENCE [LARGE SCALE GENOMIC DNA]</scope>
    <source>
        <strain>K12 / MG1655 / ATCC 47076</strain>
    </source>
</reference>
<reference key="2">
    <citation type="journal article" date="2006" name="Mol. Syst. Biol.">
        <title>Highly accurate genome sequences of Escherichia coli K-12 strains MG1655 and W3110.</title>
        <authorList>
            <person name="Hayashi K."/>
            <person name="Morooka N."/>
            <person name="Yamamoto Y."/>
            <person name="Fujita K."/>
            <person name="Isono K."/>
            <person name="Choi S."/>
            <person name="Ohtsubo E."/>
            <person name="Baba T."/>
            <person name="Wanner B.L."/>
            <person name="Mori H."/>
            <person name="Horiuchi T."/>
        </authorList>
    </citation>
    <scope>NUCLEOTIDE SEQUENCE [LARGE SCALE GENOMIC DNA]</scope>
    <source>
        <strain>K12 / W3110 / ATCC 27325 / DSM 5911</strain>
    </source>
</reference>
<reference key="3">
    <citation type="journal article" date="1989" name="Mol. Microbiol.">
        <title>Identification, molecular cloning and sequence analysis of a gene cluster encoding the class II fructose 1,6-bisphosphate aldolase, 3-phosphoglycerate kinase and a putative second glyceraldehyde 3-phosphate dehydrogenase of Escherichia coli.</title>
        <authorList>
            <person name="Alefounder P.R."/>
            <person name="Perham R.N."/>
        </authorList>
    </citation>
    <scope>PRELIMINARY NUCLEOTIDE SEQUENCE [GENOMIC DNA] OF 181-321</scope>
</reference>
<reference key="4">
    <citation type="journal article" date="2009" name="J. Biol. Chem.">
        <title>Structural and biochemical characterization of the type II fructose-1,6-bisphosphatase GlpX from Escherichia coli.</title>
        <authorList>
            <person name="Brown G."/>
            <person name="Singer A."/>
            <person name="Lunin V.V."/>
            <person name="Proudfoot M."/>
            <person name="Skarina T."/>
            <person name="Flick R."/>
            <person name="Kochinyan S."/>
            <person name="Sanishvili R."/>
            <person name="Joachimiak A."/>
            <person name="Edwards A.M."/>
            <person name="Savchenko A."/>
            <person name="Yakunin A.F."/>
        </authorList>
    </citation>
    <scope>FUNCTION</scope>
    <scope>CATALYTIC ACTIVITY</scope>
    <scope>SUBSTRATE SPECIFICITY</scope>
    <scope>COFACTOR</scope>
    <scope>BIOPHYSICOCHEMICAL PROPERTIES</scope>
    <scope>ACTIVITY REGULATION</scope>
    <scope>SUBUNIT</scope>
    <source>
        <strain>K12</strain>
    </source>
</reference>
<evidence type="ECO:0000250" key="1"/>
<evidence type="ECO:0000269" key="2">
    <source>
    </source>
</evidence>
<evidence type="ECO:0000305" key="3"/>